<sequence>MRTLALSLGLALLCLLHAKAAATVPDRSEIAGKWYVVALASNTEFFLREKDKMKMAMARISFLGEDELKVSYAVPKPNGCRKWETTFKKTSDDGEVYYSEEAKKKVEVLDTDYKSYAVIYATRVKDGRTLHMMRLYSRSPEVSPAATAIFRKLAGERNYTDEMVAMLPRQEECTVDEV</sequence>
<organism>
    <name type="scientific">Coturnix japonica</name>
    <name type="common">Japanese quail</name>
    <name type="synonym">Coturnix coturnix japonica</name>
    <dbReference type="NCBI Taxonomy" id="93934"/>
    <lineage>
        <taxon>Eukaryota</taxon>
        <taxon>Metazoa</taxon>
        <taxon>Chordata</taxon>
        <taxon>Craniata</taxon>
        <taxon>Vertebrata</taxon>
        <taxon>Euteleostomi</taxon>
        <taxon>Archelosauria</taxon>
        <taxon>Archosauria</taxon>
        <taxon>Dinosauria</taxon>
        <taxon>Saurischia</taxon>
        <taxon>Theropoda</taxon>
        <taxon>Coelurosauria</taxon>
        <taxon>Aves</taxon>
        <taxon>Neognathae</taxon>
        <taxon>Galloanserae</taxon>
        <taxon>Galliformes</taxon>
        <taxon>Phasianidae</taxon>
        <taxon>Perdicinae</taxon>
        <taxon>Coturnix</taxon>
    </lineage>
</organism>
<evidence type="ECO:0000250" key="1"/>
<evidence type="ECO:0000250" key="2">
    <source>
        <dbReference type="UniProtKB" id="P21760"/>
    </source>
</evidence>
<evidence type="ECO:0000269" key="3">
    <source>
    </source>
</evidence>
<evidence type="ECO:0000269" key="4">
    <source>
    </source>
</evidence>
<evidence type="ECO:0000269" key="5">
    <source>
    </source>
</evidence>
<evidence type="ECO:0000305" key="6"/>
<evidence type="ECO:0007829" key="7">
    <source>
        <dbReference type="PDB" id="1JZU"/>
    </source>
</evidence>
<evidence type="ECO:0007829" key="8">
    <source>
        <dbReference type="PDB" id="2KT4"/>
    </source>
</evidence>
<comment type="function">
    <text evidence="4 5">Siderocalin-like lipocalin tightly binding a variety of bacterial ferric siderophores, also binds long-chain unsaturated fatty acids such as linoleic acid, oleic acid, arachidonic acid and, with a lower affinity, long chain saturated fatty acids such as steraic acid. May act as an antibacterial factor, through dual ligand specificity, both as a siderophore-sequestrating molecule and a lysophosphatidic acid (LPA) sensor.</text>
</comment>
<comment type="subunit">
    <text evidence="3 4 5">Monomer.</text>
</comment>
<comment type="subcellular location">
    <subcellularLocation>
        <location evidence="1">Secreted</location>
    </subcellularLocation>
</comment>
<comment type="similarity">
    <text evidence="6">Belongs to the calycin superfamily. Lipocalin family.</text>
</comment>
<keyword id="KW-0002">3D-structure</keyword>
<keyword id="KW-0044">Antibiotic</keyword>
<keyword id="KW-0929">Antimicrobial</keyword>
<keyword id="KW-1015">Disulfide bond</keyword>
<keyword id="KW-0391">Immunity</keyword>
<keyword id="KW-0399">Innate immunity</keyword>
<keyword id="KW-0408">Iron</keyword>
<keyword id="KW-1185">Reference proteome</keyword>
<keyword id="KW-0964">Secreted</keyword>
<keyword id="KW-0732">Signal</keyword>
<keyword id="KW-0813">Transport</keyword>
<name>EXFAB_COTJA</name>
<feature type="signal peptide" evidence="1">
    <location>
        <begin position="1"/>
        <end position="20"/>
    </location>
</feature>
<feature type="chain" id="PRO_0000017959" description="Extracellular fatty acid-binding protein">
    <location>
        <begin position="21"/>
        <end position="178"/>
    </location>
</feature>
<feature type="binding site" evidence="2">
    <location>
        <position position="43"/>
    </location>
    <ligand>
        <name>enterobactin</name>
        <dbReference type="ChEBI" id="CHEBI:77805"/>
    </ligand>
</feature>
<feature type="binding site" evidence="2">
    <location>
        <position position="72"/>
    </location>
    <ligand>
        <name>1-tetradecanoyl-sn-glycerol 3-phosphate</name>
        <dbReference type="ChEBI" id="CHEBI:72683"/>
    </ligand>
</feature>
<feature type="binding site" evidence="2">
    <location>
        <position position="104"/>
    </location>
    <ligand>
        <name>1-tetradecanoyl-sn-glycerol 3-phosphate</name>
        <dbReference type="ChEBI" id="CHEBI:72683"/>
    </ligand>
</feature>
<feature type="binding site" evidence="2">
    <location>
        <position position="104"/>
    </location>
    <ligand>
        <name>enterobactin</name>
        <dbReference type="ChEBI" id="CHEBI:77805"/>
    </ligand>
</feature>
<feature type="binding site" evidence="2">
    <location>
        <position position="123"/>
    </location>
    <ligand>
        <name>enterobactin</name>
        <dbReference type="ChEBI" id="CHEBI:77805"/>
    </ligand>
</feature>
<feature type="binding site" evidence="2">
    <location>
        <begin position="134"/>
        <end position="136"/>
    </location>
    <ligand>
        <name>1-tetradecanoyl-sn-glycerol 3-phosphate</name>
        <dbReference type="ChEBI" id="CHEBI:72683"/>
    </ligand>
</feature>
<feature type="binding site" evidence="2">
    <location>
        <position position="134"/>
    </location>
    <ligand>
        <name>enterobactin</name>
        <dbReference type="ChEBI" id="CHEBI:77805"/>
    </ligand>
</feature>
<feature type="disulfide bond" evidence="3 4 5">
    <location>
        <begin position="80"/>
        <end position="173"/>
    </location>
</feature>
<feature type="sequence conflict" description="In Ref. 1; AAK31634." evidence="6" ref="1">
    <original>T</original>
    <variation>M</variation>
    <location>
        <position position="3"/>
    </location>
</feature>
<feature type="sequence conflict" description="In Ref. 1; AAK31634." evidence="6" ref="1">
    <original>K</original>
    <variation>E</variation>
    <location>
        <position position="103"/>
    </location>
</feature>
<feature type="helix" evidence="7">
    <location>
        <begin position="27"/>
        <end position="29"/>
    </location>
</feature>
<feature type="strand" evidence="7">
    <location>
        <begin position="31"/>
        <end position="42"/>
    </location>
</feature>
<feature type="helix" evidence="7">
    <location>
        <begin position="44"/>
        <end position="46"/>
    </location>
</feature>
<feature type="helix" evidence="7">
    <location>
        <begin position="49"/>
        <end position="52"/>
    </location>
</feature>
<feature type="strand" evidence="7">
    <location>
        <begin position="56"/>
        <end position="63"/>
    </location>
</feature>
<feature type="turn" evidence="7">
    <location>
        <begin position="64"/>
        <end position="66"/>
    </location>
</feature>
<feature type="strand" evidence="7">
    <location>
        <begin position="67"/>
        <end position="76"/>
    </location>
</feature>
<feature type="turn" evidence="7">
    <location>
        <begin position="77"/>
        <end position="80"/>
    </location>
</feature>
<feature type="strand" evidence="7">
    <location>
        <begin position="81"/>
        <end position="91"/>
    </location>
</feature>
<feature type="strand" evidence="7">
    <location>
        <begin position="93"/>
        <end position="100"/>
    </location>
</feature>
<feature type="turn" evidence="7">
    <location>
        <begin position="101"/>
        <end position="103"/>
    </location>
</feature>
<feature type="strand" evidence="7">
    <location>
        <begin position="104"/>
        <end position="110"/>
    </location>
</feature>
<feature type="strand" evidence="7">
    <location>
        <begin position="114"/>
        <end position="125"/>
    </location>
</feature>
<feature type="strand" evidence="7">
    <location>
        <begin position="128"/>
        <end position="141"/>
    </location>
</feature>
<feature type="helix" evidence="7">
    <location>
        <begin position="144"/>
        <end position="157"/>
    </location>
</feature>
<feature type="helix" evidence="7">
    <location>
        <begin position="161"/>
        <end position="163"/>
    </location>
</feature>
<feature type="strand" evidence="8">
    <location>
        <begin position="164"/>
        <end position="166"/>
    </location>
</feature>
<feature type="strand" evidence="7">
    <location>
        <begin position="170"/>
        <end position="173"/>
    </location>
</feature>
<protein>
    <recommendedName>
        <fullName>Extracellular fatty acid-binding protein</fullName>
        <shortName>Ex-FABP</shortName>
    </recommendedName>
    <alternativeName>
        <fullName>Lipocalin Q83</fullName>
    </alternativeName>
</protein>
<proteinExistence type="evidence at protein level"/>
<dbReference type="EMBL" id="AF229030">
    <property type="protein sequence ID" value="AAF35894.1"/>
    <property type="molecule type" value="mRNA"/>
</dbReference>
<dbReference type="EMBL" id="AY029238">
    <property type="protein sequence ID" value="AAK31634.1"/>
    <property type="molecule type" value="Genomic_DNA"/>
</dbReference>
<dbReference type="PDB" id="1JZU">
    <property type="method" value="NMR"/>
    <property type="chains" value="A=22-178"/>
</dbReference>
<dbReference type="PDB" id="2KT4">
    <property type="method" value="NMR"/>
    <property type="chains" value="B=23-178"/>
</dbReference>
<dbReference type="PDB" id="2LBV">
    <property type="method" value="NMR"/>
    <property type="chains" value="A=23-178"/>
</dbReference>
<dbReference type="PDBsum" id="1JZU"/>
<dbReference type="PDBsum" id="2KT4"/>
<dbReference type="PDBsum" id="2LBV"/>
<dbReference type="BMRB" id="Q9I9P7"/>
<dbReference type="SMR" id="Q9I9P7"/>
<dbReference type="EvolutionaryTrace" id="Q9I9P7"/>
<dbReference type="Proteomes" id="UP000694412">
    <property type="component" value="Unplaced"/>
</dbReference>
<dbReference type="GO" id="GO:0005576">
    <property type="term" value="C:extracellular region"/>
    <property type="evidence" value="ECO:0007669"/>
    <property type="project" value="UniProtKB-SubCell"/>
</dbReference>
<dbReference type="GO" id="GO:0050544">
    <property type="term" value="F:arachidonate binding"/>
    <property type="evidence" value="ECO:0000314"/>
    <property type="project" value="AgBase"/>
</dbReference>
<dbReference type="GO" id="GO:1903981">
    <property type="term" value="F:enterobactin binding"/>
    <property type="evidence" value="ECO:0000314"/>
    <property type="project" value="AgBase"/>
</dbReference>
<dbReference type="GO" id="GO:0070538">
    <property type="term" value="F:oleic acid binding"/>
    <property type="evidence" value="ECO:0000314"/>
    <property type="project" value="AgBase"/>
</dbReference>
<dbReference type="GO" id="GO:0042742">
    <property type="term" value="P:defense response to bacterium"/>
    <property type="evidence" value="ECO:0007669"/>
    <property type="project" value="UniProtKB-KW"/>
</dbReference>
<dbReference type="GO" id="GO:0045087">
    <property type="term" value="P:innate immune response"/>
    <property type="evidence" value="ECO:0007669"/>
    <property type="project" value="UniProtKB-KW"/>
</dbReference>
<dbReference type="CDD" id="cd19439">
    <property type="entry name" value="lipocalin_Ex-FABP-like"/>
    <property type="match status" value="1"/>
</dbReference>
<dbReference type="Gene3D" id="2.40.128.20">
    <property type="match status" value="1"/>
</dbReference>
<dbReference type="InterPro" id="IPR012674">
    <property type="entry name" value="Calycin"/>
</dbReference>
<dbReference type="InterPro" id="IPR002345">
    <property type="entry name" value="Lipocalin"/>
</dbReference>
<dbReference type="InterPro" id="IPR022272">
    <property type="entry name" value="Lipocalin_CS"/>
</dbReference>
<dbReference type="InterPro" id="IPR000566">
    <property type="entry name" value="Lipocln_cytosolic_FA-bd_dom"/>
</dbReference>
<dbReference type="PANTHER" id="PTHR11430">
    <property type="entry name" value="LIPOCALIN"/>
    <property type="match status" value="1"/>
</dbReference>
<dbReference type="PANTHER" id="PTHR11430:SF77">
    <property type="entry name" value="LIPOCALIN-LIKE 1 PROTEIN"/>
    <property type="match status" value="1"/>
</dbReference>
<dbReference type="Pfam" id="PF00061">
    <property type="entry name" value="Lipocalin"/>
    <property type="match status" value="1"/>
</dbReference>
<dbReference type="PRINTS" id="PR00179">
    <property type="entry name" value="LIPOCALIN"/>
</dbReference>
<dbReference type="PRINTS" id="PR01254">
    <property type="entry name" value="PGNDSYNTHASE"/>
</dbReference>
<dbReference type="SUPFAM" id="SSF50814">
    <property type="entry name" value="Lipocalins"/>
    <property type="match status" value="1"/>
</dbReference>
<dbReference type="PROSITE" id="PS00213">
    <property type="entry name" value="LIPOCALIN"/>
    <property type="match status" value="1"/>
</dbReference>
<accession>Q9I9P7</accession>
<accession>Q98SI8</accession>
<reference key="1">
    <citation type="submission" date="2001-04" db="EMBL/GenBank/DDBJ databases">
        <title>High-level expression in v-myc-transformed avian fibroblasts of a gene encoding a member of the lipocalin protein family.</title>
        <authorList>
            <person name="Siemeister G."/>
            <person name="Hartl M."/>
            <person name="Bister K."/>
        </authorList>
    </citation>
    <scope>NUCLEOTIDE SEQUENCE</scope>
</reference>
<reference key="2">
    <citation type="journal article" date="2003" name="J. Mol. Biol.">
        <title>Cell transformation by the v-myc oncogene abrogates c-Myc/Max-mediated suppression of a C/EBP beta-dependent lipocalin gene.</title>
        <authorList>
            <person name="Hartl M."/>
            <person name="Matt T."/>
            <person name="Schuler W."/>
            <person name="Siemeister G."/>
            <person name="Kontaxis G."/>
            <person name="Kloiber K."/>
            <person name="Konrat R."/>
            <person name="Bister K."/>
        </authorList>
    </citation>
    <scope>STRUCTURE BY NMR OF 23-178</scope>
    <scope>SUBUNIT</scope>
    <scope>DISULFIDE BOND</scope>
</reference>
<reference key="3">
    <citation type="journal article" date="2010" name="J. Biol. Chem.">
        <title>The v-myc-induced Q83 lipocalin is a siderocalin.</title>
        <authorList>
            <person name="Coudevylle N."/>
            <person name="Geist L."/>
            <person name="Hotzinger M."/>
            <person name="Hartl M."/>
            <person name="Kontaxis G."/>
            <person name="Bister K."/>
            <person name="Konrat R."/>
        </authorList>
    </citation>
    <scope>STRUCTURE BY NMR OF 23-178 IN COMPLEX WITH ENTEROBACTIN</scope>
    <scope>FUNCTION</scope>
    <scope>SUBUNIT</scope>
    <scope>DISULFIDE BOND</scope>
</reference>
<reference key="4">
    <citation type="journal article" date="2011" name="Biochemistry">
        <title>Lipocalin Q83 reveals a dual ligand binding mode with potential implications for the functions of siderocalins.</title>
        <authorList>
            <person name="Coudevylle N."/>
            <person name="Hoetzinger M."/>
            <person name="Geist L."/>
            <person name="Kontaxis G."/>
            <person name="Hartl M."/>
            <person name="Bister K."/>
            <person name="Konrat R."/>
        </authorList>
    </citation>
    <scope>STRUCTURE BY NMR OF 23-178</scope>
    <scope>FUNCTION</scope>
    <scope>SUBUNIT</scope>
    <scope>DISULFIDE BOND</scope>
</reference>